<dbReference type="EMBL" id="AF325528">
    <property type="protein sequence ID" value="AAK85079.1"/>
    <property type="molecule type" value="Genomic_DNA"/>
</dbReference>
<dbReference type="EMBL" id="AF409137">
    <property type="protein sequence ID" value="AAN02686.1"/>
    <property type="molecule type" value="Genomic_DNA"/>
</dbReference>
<dbReference type="EMBL" id="AF409138">
    <property type="protein sequence ID" value="AAN02843.1"/>
    <property type="molecule type" value="Genomic_DNA"/>
</dbReference>
<dbReference type="RefSeq" id="NP_150552.1">
    <property type="nucleotide sequence ID" value="NC_003027.1"/>
</dbReference>
<dbReference type="SMR" id="Q8JTR0"/>
<dbReference type="GeneID" id="921573"/>
<dbReference type="KEGG" id="vg:921573"/>
<dbReference type="OrthoDB" id="17447at10239"/>
<dbReference type="Proteomes" id="UP000126568">
    <property type="component" value="Segment"/>
</dbReference>
<dbReference type="Proteomes" id="UP000127252">
    <property type="component" value="Genome"/>
</dbReference>
<dbReference type="Proteomes" id="UP000156762">
    <property type="component" value="Segment"/>
</dbReference>
<dbReference type="GO" id="GO:0016020">
    <property type="term" value="C:membrane"/>
    <property type="evidence" value="ECO:0007669"/>
    <property type="project" value="UniProtKB-KW"/>
</dbReference>
<dbReference type="GO" id="GO:0019031">
    <property type="term" value="C:viral envelope"/>
    <property type="evidence" value="ECO:0007669"/>
    <property type="project" value="UniProtKB-KW"/>
</dbReference>
<dbReference type="GO" id="GO:0055036">
    <property type="term" value="C:virion membrane"/>
    <property type="evidence" value="ECO:0007669"/>
    <property type="project" value="UniProtKB-SubCell"/>
</dbReference>
<dbReference type="GO" id="GO:0039663">
    <property type="term" value="P:membrane fusion involved in viral entry into host cell"/>
    <property type="evidence" value="ECO:0007669"/>
    <property type="project" value="UniProtKB-KW"/>
</dbReference>
<dbReference type="GO" id="GO:0046718">
    <property type="term" value="P:symbiont entry into host cell"/>
    <property type="evidence" value="ECO:0007669"/>
    <property type="project" value="UniProtKB-KW"/>
</dbReference>
<dbReference type="InterPro" id="IPR007664">
    <property type="entry name" value="Poxvirus_A28"/>
</dbReference>
<dbReference type="Pfam" id="PF04584">
    <property type="entry name" value="Pox_A28"/>
    <property type="match status" value="1"/>
</dbReference>
<proteinExistence type="inferred from homology"/>
<name>A28_LSDV</name>
<accession>Q8JTR0</accession>
<organismHost>
    <name type="scientific">Bos taurus</name>
    <name type="common">Bovine</name>
    <dbReference type="NCBI Taxonomy" id="9913"/>
</organismHost>
<reference key="1">
    <citation type="journal article" date="2001" name="J. Virol.">
        <title>Genome of lumpy skin disease virus.</title>
        <authorList>
            <person name="Tulman E.R."/>
            <person name="Afonso C.L."/>
            <person name="Lu Z."/>
            <person name="Zsak L."/>
            <person name="Kutish G.F."/>
            <person name="Rock D.L."/>
        </authorList>
    </citation>
    <scope>NUCLEOTIDE SEQUENCE [LARGE SCALE GENOMIC DNA]</scope>
    <source>
        <strain>Isolate Neethling 2490</strain>
    </source>
</reference>
<reference key="2">
    <citation type="journal article" date="2003" name="Arch. Virol.">
        <title>Comparative sequence analysis of the South African vaccine strain and two virulent field isolates of Lumpy skin disease virus.</title>
        <authorList>
            <person name="Kara P.D."/>
            <person name="Afonso C.L."/>
            <person name="Wallace D.B."/>
            <person name="Kutish G.F."/>
            <person name="Abolnik C."/>
            <person name="Lu Z."/>
            <person name="Vreede F.T."/>
            <person name="Taljaard L.C.F."/>
            <person name="Zsak A."/>
            <person name="Viljoen G.J."/>
            <person name="Rock D.L."/>
        </authorList>
    </citation>
    <scope>NUCLEOTIDE SEQUENCE [LARGE SCALE GENOMIC DNA]</scope>
    <source>
        <strain>Isolate Neethling vaccine LW 1959</strain>
        <strain>Isolate Neethling Warmbaths LW</strain>
    </source>
</reference>
<gene>
    <name type="ordered locus">LSDV118</name>
    <name type="ordered locus">LD118</name>
    <name type="ordered locus">LW118</name>
</gene>
<sequence>MNAITIFFIILSTVAVCIIIFQLYSIYLNYDNIKEFNSAHSAFEFSKSVNTLSLDRTIKDPNDDIYDPKQKWRCVKLDNDYVSVSMFGFKSNGSEIRKFKNLESCIDYTFSQSTHSDIKNPCILQNGIKSKECIFLKSMF</sequence>
<evidence type="ECO:0000250" key="1"/>
<evidence type="ECO:0000255" key="2"/>
<evidence type="ECO:0000305" key="3"/>
<organism>
    <name type="scientific">Lumpy skin disease virus</name>
    <name type="common">LSDV</name>
    <dbReference type="NCBI Taxonomy" id="59509"/>
    <lineage>
        <taxon>Viruses</taxon>
        <taxon>Varidnaviria</taxon>
        <taxon>Bamfordvirae</taxon>
        <taxon>Nucleocytoviricota</taxon>
        <taxon>Pokkesviricetes</taxon>
        <taxon>Chitovirales</taxon>
        <taxon>Poxviridae</taxon>
        <taxon>Chordopoxvirinae</taxon>
        <taxon>Capripoxvirus</taxon>
    </lineage>
</organism>
<keyword id="KW-1015">Disulfide bond</keyword>
<keyword id="KW-1168">Fusion of virus membrane with host membrane</keyword>
<keyword id="KW-0426">Late protein</keyword>
<keyword id="KW-0472">Membrane</keyword>
<keyword id="KW-0735">Signal-anchor</keyword>
<keyword id="KW-0812">Transmembrane</keyword>
<keyword id="KW-1133">Transmembrane helix</keyword>
<keyword id="KW-0261">Viral envelope protein</keyword>
<keyword id="KW-1162">Viral penetration into host cytoplasm</keyword>
<keyword id="KW-0946">Virion</keyword>
<keyword id="KW-1160">Virus entry into host cell</keyword>
<comment type="function">
    <text evidence="1">Envelope protein required for virus entry into host cell and for cell-cell fusion (syncytium formation).</text>
</comment>
<comment type="subcellular location">
    <subcellularLocation>
        <location evidence="3">Virion membrane</location>
        <topology evidence="3">Single-pass type II membrane protein</topology>
    </subcellularLocation>
    <text evidence="1">Component of the intracellular mature virion (IMV) membrane.</text>
</comment>
<comment type="PTM">
    <text evidence="1">Contains two intramolecular disulfide bonds. They are created by the viral disulfide bond formation pathway, a poxvirus-specific pathway that operates on the cytoplasmic side of the MV membranes (By similarity).</text>
</comment>
<comment type="similarity">
    <text evidence="3">Belongs to the poxviridae A28 protein family.</text>
</comment>
<protein>
    <recommendedName>
        <fullName>Envelope protein A28 homolog</fullName>
    </recommendedName>
    <alternativeName>
        <fullName>Protein LSDV118</fullName>
    </alternativeName>
</protein>
<feature type="chain" id="PRO_0000099292" description="Envelope protein A28 homolog">
    <location>
        <begin position="1"/>
        <end position="140"/>
    </location>
</feature>
<feature type="transmembrane region" description="Helical; Signal-anchor for type II membrane protein" evidence="2">
    <location>
        <begin position="1"/>
        <end position="21"/>
    </location>
</feature>
<feature type="topological domain" description="Virion surface" evidence="2">
    <location>
        <begin position="22"/>
        <end position="140"/>
    </location>
</feature>
<feature type="sequence variant" description="In strain: Isolate Neethling vaccine LW 1959.">
    <original>I</original>
    <variation>V</variation>
    <location>
        <position position="10"/>
    </location>
</feature>